<evidence type="ECO:0000269" key="1">
    <source>
    </source>
</evidence>
<evidence type="ECO:0000269" key="2">
    <source>
    </source>
</evidence>
<evidence type="ECO:0000303" key="3">
    <source>
    </source>
</evidence>
<evidence type="ECO:0000305" key="4"/>
<comment type="catalytic activity">
    <reaction evidence="1 2">
        <text>phosphonoacetate + H2O = acetate + phosphate + H(+)</text>
        <dbReference type="Rhea" id="RHEA:16749"/>
        <dbReference type="ChEBI" id="CHEBI:15377"/>
        <dbReference type="ChEBI" id="CHEBI:15378"/>
        <dbReference type="ChEBI" id="CHEBI:30089"/>
        <dbReference type="ChEBI" id="CHEBI:43474"/>
        <dbReference type="ChEBI" id="CHEBI:57488"/>
        <dbReference type="EC" id="3.11.1.2"/>
    </reaction>
</comment>
<comment type="cofactor">
    <text evidence="1 2">Unlike bacterial phosphonoacetate hydrolase, does not require zinc as a cofactor.</text>
</comment>
<comment type="activity regulation">
    <text evidence="1 2">Unaffected by EDTA or Ca(2+), Co(2+), Cu(2+), Mg(2+), Mn(2+), Ni(2+) and Zn(2+).</text>
</comment>
<comment type="biophysicochemical properties">
    <kinetics>
        <KM evidence="1 2">1.8 mM for phosphonoacetate</KM>
    </kinetics>
    <phDependence>
        <text evidence="1 2">Optimum pH is 8.3. High activity between pH 7.5 and 8.6, rapidly loses activity below pH 7.0. Loss of activity below pH 6.3 is irreversible.</text>
    </phDependence>
    <temperatureDependence>
        <text evidence="1 2">Optimum temperature is 52 degrees Celsius.</text>
    </temperatureDependence>
</comment>
<comment type="subunit">
    <text evidence="2">Monomer.</text>
</comment>
<name>PHNHY_PENOX</name>
<dbReference type="EC" id="3.11.1.2"/>
<dbReference type="GO" id="GO:0047400">
    <property type="term" value="F:phosphonoacetate hydrolase activity"/>
    <property type="evidence" value="ECO:0007669"/>
    <property type="project" value="UniProtKB-EC"/>
</dbReference>
<dbReference type="Gene3D" id="3.40.720.10">
    <property type="entry name" value="Alkaline Phosphatase, subunit A"/>
    <property type="match status" value="1"/>
</dbReference>
<dbReference type="InterPro" id="IPR017850">
    <property type="entry name" value="Alkaline_phosphatase_core_sf"/>
</dbReference>
<keyword id="KW-0903">Direct protein sequencing</keyword>
<keyword id="KW-0378">Hydrolase</keyword>
<protein>
    <recommendedName>
        <fullName evidence="3">Phosphonoacetate hydrolase</fullName>
        <shortName evidence="3">PA-hydrolase</shortName>
        <ecNumber>3.11.1.2</ecNumber>
    </recommendedName>
</protein>
<reference evidence="4" key="1">
    <citation type="journal article" date="2006" name="Res. Microbiol.">
        <title>Phosphonoacetate hydrolase from Penicillium oxalicum: purification and properties, phosphate starvation-independent expression, and partial sequencing.</title>
        <authorList>
            <person name="Klimek-Ochab M."/>
            <person name="Raucci G."/>
            <person name="Lejczak B."/>
            <person name="Forlani G."/>
        </authorList>
    </citation>
    <scope>PROTEIN SEQUENCE</scope>
    <scope>CATALYTIC ACTIVITY</scope>
    <scope>ABSENCE OF COFACTOR REQUIREMENT</scope>
    <scope>ACTIVITY REGULATION</scope>
    <scope>BIOPHYSICOCHEMICAL PROPERTIES</scope>
    <scope>SUBUNIT</scope>
</reference>
<reference evidence="4" key="2">
    <citation type="journal article" date="2003" name="FEMS Microbiol. Lett.">
        <title>A metal-independent hydrolase from a Penicillium oxalicum strain able to use phosphonoacetic acid as the only phosphorus source.</title>
        <authorList>
            <person name="Klimek-Ochab M."/>
            <person name="Lejczak B."/>
            <person name="Forlani G."/>
        </authorList>
    </citation>
    <scope>CATALYTIC ACTIVITY</scope>
    <scope>ABSENCE OF COFACTOR REQUIREMENT</scope>
    <scope>ACTIVITY REGULATION</scope>
    <scope>BIOPHYSICOCHEMICAL PROPERTIES</scope>
</reference>
<sequence>GSTLLEQMSLHGVRHAPGSLEANDFFLANDQRHGALGSFVRADEHDLSTLGDHPLRSHGGLSEQQLPLLLSR</sequence>
<proteinExistence type="evidence at protein level"/>
<feature type="chain" id="PRO_0000402577" description="Phosphonoacetate hydrolase">
    <location>
        <begin position="1" status="less than"/>
        <end position="72" status="greater than"/>
    </location>
</feature>
<feature type="unsure residue" description="L or I" evidence="2">
    <location>
        <position position="4"/>
    </location>
</feature>
<feature type="unsure residue" description="L or I" evidence="2">
    <location>
        <position position="5"/>
    </location>
</feature>
<feature type="unsure residue" description="M or F" evidence="2">
    <location>
        <position position="8"/>
    </location>
</feature>
<feature type="unsure residue" description="L or I" evidence="2">
    <location>
        <position position="10"/>
    </location>
</feature>
<feature type="unsure residue" description="L or I" evidence="2">
    <location>
        <position position="20"/>
    </location>
</feature>
<feature type="unsure residue" description="L or I" evidence="2">
    <location>
        <position position="27"/>
    </location>
</feature>
<feature type="unsure residue" description="L or I" evidence="2">
    <location>
        <position position="36"/>
    </location>
</feature>
<feature type="unsure residue" description="L or I" evidence="2">
    <location>
        <position position="47"/>
    </location>
</feature>
<feature type="unsure residue" description="L or I" evidence="2">
    <location>
        <position position="50"/>
    </location>
</feature>
<feature type="unsure residue" description="L or I" evidence="2">
    <location>
        <position position="55"/>
    </location>
</feature>
<feature type="unsure residue" description="L or I" evidence="2">
    <location>
        <position position="61"/>
    </location>
</feature>
<feature type="unsure residue" description="L or I" evidence="2">
    <location>
        <position position="66"/>
    </location>
</feature>
<feature type="unsure residue" description="L or I" evidence="2">
    <location>
        <position position="68"/>
    </location>
</feature>
<feature type="unsure residue" description="L or I" evidence="2">
    <location>
        <position position="69"/>
    </location>
</feature>
<feature type="unsure residue" description="L or I" evidence="2">
    <location>
        <position position="70"/>
    </location>
</feature>
<feature type="non-consecutive residues" evidence="3">
    <location>
        <begin position="14"/>
        <end position="15"/>
    </location>
</feature>
<feature type="non-consecutive residues" evidence="3">
    <location>
        <begin position="32"/>
        <end position="33"/>
    </location>
</feature>
<feature type="non-consecutive residues" evidence="3">
    <location>
        <begin position="41"/>
        <end position="42"/>
    </location>
</feature>
<feature type="non-terminal residue" evidence="3">
    <location>
        <position position="1"/>
    </location>
</feature>
<feature type="non-terminal residue" evidence="3">
    <location>
        <position position="72"/>
    </location>
</feature>
<organism>
    <name type="scientific">Penicillium oxalicum</name>
    <dbReference type="NCBI Taxonomy" id="69781"/>
    <lineage>
        <taxon>Eukaryota</taxon>
        <taxon>Fungi</taxon>
        <taxon>Dikarya</taxon>
        <taxon>Ascomycota</taxon>
        <taxon>Pezizomycotina</taxon>
        <taxon>Eurotiomycetes</taxon>
        <taxon>Eurotiomycetidae</taxon>
        <taxon>Eurotiales</taxon>
        <taxon>Aspergillaceae</taxon>
        <taxon>Penicillium</taxon>
    </lineage>
</organism>
<accession>P86807</accession>